<comment type="function">
    <text evidence="1">Essential cell division protein that stabilizes the FtsZ protofilaments by cross-linking them and that serves as a cytoplasmic membrane anchor for the Z ring. Also required for the recruitment to the septal ring of downstream cell division proteins.</text>
</comment>
<comment type="subunit">
    <text evidence="1">Interacts with FtsZ via their C-terminal domains.</text>
</comment>
<comment type="subcellular location">
    <subcellularLocation>
        <location evidence="1">Cell inner membrane</location>
        <topology evidence="1">Single-pass type I membrane protein</topology>
    </subcellularLocation>
    <text evidence="1">Localizes to the Z ring in an FtsZ-dependent manner.</text>
</comment>
<comment type="similarity">
    <text evidence="1">Belongs to the ZipA family.</text>
</comment>
<name>ZIPA_ECO45</name>
<organism>
    <name type="scientific">Escherichia coli O45:K1 (strain S88 / ExPEC)</name>
    <dbReference type="NCBI Taxonomy" id="585035"/>
    <lineage>
        <taxon>Bacteria</taxon>
        <taxon>Pseudomonadati</taxon>
        <taxon>Pseudomonadota</taxon>
        <taxon>Gammaproteobacteria</taxon>
        <taxon>Enterobacterales</taxon>
        <taxon>Enterobacteriaceae</taxon>
        <taxon>Escherichia</taxon>
    </lineage>
</organism>
<protein>
    <recommendedName>
        <fullName evidence="1">Cell division protein ZipA</fullName>
    </recommendedName>
</protein>
<reference key="1">
    <citation type="journal article" date="2009" name="PLoS Genet.">
        <title>Organised genome dynamics in the Escherichia coli species results in highly diverse adaptive paths.</title>
        <authorList>
            <person name="Touchon M."/>
            <person name="Hoede C."/>
            <person name="Tenaillon O."/>
            <person name="Barbe V."/>
            <person name="Baeriswyl S."/>
            <person name="Bidet P."/>
            <person name="Bingen E."/>
            <person name="Bonacorsi S."/>
            <person name="Bouchier C."/>
            <person name="Bouvet O."/>
            <person name="Calteau A."/>
            <person name="Chiapello H."/>
            <person name="Clermont O."/>
            <person name="Cruveiller S."/>
            <person name="Danchin A."/>
            <person name="Diard M."/>
            <person name="Dossat C."/>
            <person name="Karoui M.E."/>
            <person name="Frapy E."/>
            <person name="Garry L."/>
            <person name="Ghigo J.M."/>
            <person name="Gilles A.M."/>
            <person name="Johnson J."/>
            <person name="Le Bouguenec C."/>
            <person name="Lescat M."/>
            <person name="Mangenot S."/>
            <person name="Martinez-Jehanne V."/>
            <person name="Matic I."/>
            <person name="Nassif X."/>
            <person name="Oztas S."/>
            <person name="Petit M.A."/>
            <person name="Pichon C."/>
            <person name="Rouy Z."/>
            <person name="Ruf C.S."/>
            <person name="Schneider D."/>
            <person name="Tourret J."/>
            <person name="Vacherie B."/>
            <person name="Vallenet D."/>
            <person name="Medigue C."/>
            <person name="Rocha E.P.C."/>
            <person name="Denamur E."/>
        </authorList>
    </citation>
    <scope>NUCLEOTIDE SEQUENCE [LARGE SCALE GENOMIC DNA]</scope>
    <source>
        <strain>S88 / ExPEC</strain>
    </source>
</reference>
<sequence>MMQDLRLILIIVGAIAIIALLVHGFWTSRKERSSMFRDRPLKRMKSKRDDDSYDEDVEDDEGVGEVRVHRVNHAPANAQEHEAARPSPQHQYQPPYASAQPRQPVQQPPEAQVPPQHAPRPAQPVQQPVQQPAYQPQPEQPLQQPVSPQVASAPQPVHSAPQPAQQAFQPAEPVAAPQPEPVAEPAPVMDKPKRKEAVIIMNVAAHHGSELNGELLLNSIQQAGFIFGDMNIYHRHLSPDGSGPALFSLANMVKPGTFDPEMKDFTTPGVTIFMQVPSYGDELQNFKLMLQSAQHIADEVGGVVLDDQRRMMTPQKLREYQDIIREVKDANA</sequence>
<evidence type="ECO:0000255" key="1">
    <source>
        <dbReference type="HAMAP-Rule" id="MF_00509"/>
    </source>
</evidence>
<evidence type="ECO:0000256" key="2">
    <source>
        <dbReference type="SAM" id="MobiDB-lite"/>
    </source>
</evidence>
<proteinExistence type="inferred from homology"/>
<gene>
    <name evidence="1" type="primary">zipA</name>
    <name type="ordered locus">ECS88_2602</name>
</gene>
<feature type="chain" id="PRO_1000127215" description="Cell division protein ZipA">
    <location>
        <begin position="1"/>
        <end position="332"/>
    </location>
</feature>
<feature type="topological domain" description="Periplasmic" evidence="1">
    <location>
        <begin position="1"/>
        <end position="6"/>
    </location>
</feature>
<feature type="transmembrane region" description="Helical" evidence="1">
    <location>
        <begin position="7"/>
        <end position="27"/>
    </location>
</feature>
<feature type="topological domain" description="Cytoplasmic" evidence="1">
    <location>
        <begin position="28"/>
        <end position="332"/>
    </location>
</feature>
<feature type="region of interest" description="Disordered" evidence="2">
    <location>
        <begin position="42"/>
        <end position="190"/>
    </location>
</feature>
<feature type="compositionally biased region" description="Acidic residues" evidence="2">
    <location>
        <begin position="51"/>
        <end position="63"/>
    </location>
</feature>
<feature type="compositionally biased region" description="Low complexity" evidence="2">
    <location>
        <begin position="99"/>
        <end position="115"/>
    </location>
</feature>
<feature type="compositionally biased region" description="Low complexity" evidence="2">
    <location>
        <begin position="123"/>
        <end position="151"/>
    </location>
</feature>
<feature type="compositionally biased region" description="Low complexity" evidence="2">
    <location>
        <begin position="160"/>
        <end position="175"/>
    </location>
</feature>
<accession>B7MHR6</accession>
<dbReference type="EMBL" id="CU928161">
    <property type="protein sequence ID" value="CAR03874.1"/>
    <property type="molecule type" value="Genomic_DNA"/>
</dbReference>
<dbReference type="RefSeq" id="WP_001317975.1">
    <property type="nucleotide sequence ID" value="NC_011742.1"/>
</dbReference>
<dbReference type="SMR" id="B7MHR6"/>
<dbReference type="KEGG" id="ecz:ECS88_2602"/>
<dbReference type="HOGENOM" id="CLU_030174_1_0_6"/>
<dbReference type="Proteomes" id="UP000000747">
    <property type="component" value="Chromosome"/>
</dbReference>
<dbReference type="GO" id="GO:0032153">
    <property type="term" value="C:cell division site"/>
    <property type="evidence" value="ECO:0007669"/>
    <property type="project" value="UniProtKB-UniRule"/>
</dbReference>
<dbReference type="GO" id="GO:0005886">
    <property type="term" value="C:plasma membrane"/>
    <property type="evidence" value="ECO:0007669"/>
    <property type="project" value="UniProtKB-SubCell"/>
</dbReference>
<dbReference type="GO" id="GO:0000917">
    <property type="term" value="P:division septum assembly"/>
    <property type="evidence" value="ECO:0007669"/>
    <property type="project" value="TreeGrafter"/>
</dbReference>
<dbReference type="GO" id="GO:0043093">
    <property type="term" value="P:FtsZ-dependent cytokinesis"/>
    <property type="evidence" value="ECO:0007669"/>
    <property type="project" value="UniProtKB-UniRule"/>
</dbReference>
<dbReference type="CDD" id="cd00231">
    <property type="entry name" value="ZipA"/>
    <property type="match status" value="1"/>
</dbReference>
<dbReference type="FunFam" id="3.30.1400.10:FF:000001">
    <property type="entry name" value="Cell division protein ZipA"/>
    <property type="match status" value="1"/>
</dbReference>
<dbReference type="Gene3D" id="3.30.1400.10">
    <property type="entry name" value="ZipA, C-terminal FtsZ-binding domain"/>
    <property type="match status" value="1"/>
</dbReference>
<dbReference type="HAMAP" id="MF_00509">
    <property type="entry name" value="ZipA"/>
    <property type="match status" value="1"/>
</dbReference>
<dbReference type="InterPro" id="IPR011919">
    <property type="entry name" value="Cell_div_ZipA"/>
</dbReference>
<dbReference type="InterPro" id="IPR007449">
    <property type="entry name" value="ZipA_FtsZ-bd_C"/>
</dbReference>
<dbReference type="InterPro" id="IPR036765">
    <property type="entry name" value="ZipA_FtsZ-bd_C_sf"/>
</dbReference>
<dbReference type="NCBIfam" id="TIGR02205">
    <property type="entry name" value="septum_zipA"/>
    <property type="match status" value="1"/>
</dbReference>
<dbReference type="PANTHER" id="PTHR38685">
    <property type="entry name" value="CELL DIVISION PROTEIN ZIPA"/>
    <property type="match status" value="1"/>
</dbReference>
<dbReference type="PANTHER" id="PTHR38685:SF1">
    <property type="entry name" value="CELL DIVISION PROTEIN ZIPA"/>
    <property type="match status" value="1"/>
</dbReference>
<dbReference type="Pfam" id="PF04354">
    <property type="entry name" value="ZipA_C"/>
    <property type="match status" value="1"/>
</dbReference>
<dbReference type="SMART" id="SM00771">
    <property type="entry name" value="ZipA_C"/>
    <property type="match status" value="1"/>
</dbReference>
<dbReference type="SUPFAM" id="SSF64383">
    <property type="entry name" value="Cell-division protein ZipA, C-terminal domain"/>
    <property type="match status" value="1"/>
</dbReference>
<keyword id="KW-0131">Cell cycle</keyword>
<keyword id="KW-0132">Cell division</keyword>
<keyword id="KW-0997">Cell inner membrane</keyword>
<keyword id="KW-1003">Cell membrane</keyword>
<keyword id="KW-0472">Membrane</keyword>
<keyword id="KW-1185">Reference proteome</keyword>
<keyword id="KW-0812">Transmembrane</keyword>
<keyword id="KW-1133">Transmembrane helix</keyword>